<reference key="1">
    <citation type="journal article" date="2009" name="Genome Res.">
        <title>Comparative genomics of protoploid Saccharomycetaceae.</title>
        <authorList>
            <consortium name="The Genolevures Consortium"/>
            <person name="Souciet J.-L."/>
            <person name="Dujon B."/>
            <person name="Gaillardin C."/>
            <person name="Johnston M."/>
            <person name="Baret P.V."/>
            <person name="Cliften P."/>
            <person name="Sherman D.J."/>
            <person name="Weissenbach J."/>
            <person name="Westhof E."/>
            <person name="Wincker P."/>
            <person name="Jubin C."/>
            <person name="Poulain J."/>
            <person name="Barbe V."/>
            <person name="Segurens B."/>
            <person name="Artiguenave F."/>
            <person name="Anthouard V."/>
            <person name="Vacherie B."/>
            <person name="Val M.-E."/>
            <person name="Fulton R.S."/>
            <person name="Minx P."/>
            <person name="Wilson R."/>
            <person name="Durrens P."/>
            <person name="Jean G."/>
            <person name="Marck C."/>
            <person name="Martin T."/>
            <person name="Nikolski M."/>
            <person name="Rolland T."/>
            <person name="Seret M.-L."/>
            <person name="Casaregola S."/>
            <person name="Despons L."/>
            <person name="Fairhead C."/>
            <person name="Fischer G."/>
            <person name="Lafontaine I."/>
            <person name="Leh V."/>
            <person name="Lemaire M."/>
            <person name="de Montigny J."/>
            <person name="Neuveglise C."/>
            <person name="Thierry A."/>
            <person name="Blanc-Lenfle I."/>
            <person name="Bleykasten C."/>
            <person name="Diffels J."/>
            <person name="Fritsch E."/>
            <person name="Frangeul L."/>
            <person name="Goeffon A."/>
            <person name="Jauniaux N."/>
            <person name="Kachouri-Lafond R."/>
            <person name="Payen C."/>
            <person name="Potier S."/>
            <person name="Pribylova L."/>
            <person name="Ozanne C."/>
            <person name="Richard G.-F."/>
            <person name="Sacerdot C."/>
            <person name="Straub M.-L."/>
            <person name="Talla E."/>
        </authorList>
    </citation>
    <scope>NUCLEOTIDE SEQUENCE [LARGE SCALE GENOMIC DNA]</scope>
    <source>
        <strain>ATCC 56472 / CBS 6340 / NRRL Y-8284</strain>
    </source>
</reference>
<accession>C5DE74</accession>
<sequence>MTGLEGAQNLTVADKQLTPDEGVLTESPKMTNIHEIVEDTAASSENGDSEAKEIAAKIRAGTLENVEFTEYANYLGTPGNDQILREFLLLLDPLPSSITGTLRKLSSSLYFIAEAANLDTILEALSRQWLSEHNKAHYQDNYKLCHIVMFALLMLNSTLHNSEADLSFTIEEFRENTINALQKESPDIDVPSFNRELSLCYYQLDNEQLPLLRPPSQPRYSLSGRRTNGNGGHSNMKKASMLSLERFQTNQSLISTQNSMATLTSRDTTANSNYRMRNNKPLQKLYLDEPFDAELQDLNGTPWLMDSMVNVQEASKANNSTSQLLSSPVTRKRKLMSWFRKHTKDTIFNENIHAADTDNWQHARIRIYQGRLFVYKFKGFGRERSIPRDIHKWSLEMCKRSCSQFHVYNLYGTIASLVQENIVASENSNVSSASFLIDFPHGLDSTSGLSFRFKTRNQDEAKQFTACCNFWSARISPIPSAQVEMISNEEYGWSPRLLEGESGAEQVNLAQVKLAHWKPLVGLDAIFSELDEGIALWDFDSQLGNLRVFTELLGAQLDEHNAVKPKMVELWAKKGREYQPQFEAAMENWNNKYLYLNKQYQKHLVYLKALENAVQFYERSKSVKNPETKNAAKEQS</sequence>
<gene>
    <name type="primary">YEL1</name>
    <name type="ordered locus">KLTH0C06864g</name>
</gene>
<keyword id="KW-1003">Cell membrane</keyword>
<keyword id="KW-0963">Cytoplasm</keyword>
<keyword id="KW-0344">Guanine-nucleotide releasing factor</keyword>
<keyword id="KW-0472">Membrane</keyword>
<keyword id="KW-1185">Reference proteome</keyword>
<organism>
    <name type="scientific">Lachancea thermotolerans (strain ATCC 56472 / CBS 6340 / NRRL Y-8284)</name>
    <name type="common">Yeast</name>
    <name type="synonym">Kluyveromyces thermotolerans</name>
    <dbReference type="NCBI Taxonomy" id="559295"/>
    <lineage>
        <taxon>Eukaryota</taxon>
        <taxon>Fungi</taxon>
        <taxon>Dikarya</taxon>
        <taxon>Ascomycota</taxon>
        <taxon>Saccharomycotina</taxon>
        <taxon>Saccharomycetes</taxon>
        <taxon>Saccharomycetales</taxon>
        <taxon>Saccharomycetaceae</taxon>
        <taxon>Lachancea</taxon>
    </lineage>
</organism>
<comment type="function">
    <text evidence="1">Guanine nucleotide exchange factor for ARF3 required for localization of ARF3 to the bud neck and tip and involved in actin patch polarization.</text>
</comment>
<comment type="subcellular location">
    <subcellularLocation>
        <location evidence="1">Cytoplasm</location>
    </subcellularLocation>
    <subcellularLocation>
        <location evidence="1">Cell membrane</location>
        <topology evidence="1">Peripheral membrane protein</topology>
    </subcellularLocation>
    <subcellularLocation>
        <location evidence="1">Bud neck</location>
    </subcellularLocation>
    <subcellularLocation>
        <location evidence="1">Bud tip</location>
    </subcellularLocation>
    <text evidence="1">Localizes at the cell membrane only at the bud neck and bud tip and this localization is ARF3-dependent.</text>
</comment>
<comment type="similarity">
    <text evidence="4">Belongs to the YEL1 family.</text>
</comment>
<evidence type="ECO:0000250" key="1"/>
<evidence type="ECO:0000255" key="2">
    <source>
        <dbReference type="PROSITE-ProRule" id="PRU00189"/>
    </source>
</evidence>
<evidence type="ECO:0000256" key="3">
    <source>
        <dbReference type="SAM" id="MobiDB-lite"/>
    </source>
</evidence>
<evidence type="ECO:0000305" key="4"/>
<name>YEL1_LACTC</name>
<proteinExistence type="inferred from homology"/>
<feature type="chain" id="PRO_0000404224" description="Guanine-nucleotide exchange factor YEL1">
    <location>
        <begin position="1"/>
        <end position="636"/>
    </location>
</feature>
<feature type="domain" description="SEC7" evidence="2">
    <location>
        <begin position="1"/>
        <end position="203"/>
    </location>
</feature>
<feature type="domain" description="PH">
    <location>
        <begin position="333"/>
        <end position="475"/>
    </location>
</feature>
<feature type="region of interest" description="Disordered" evidence="3">
    <location>
        <begin position="1"/>
        <end position="29"/>
    </location>
</feature>
<feature type="region of interest" description="Disordered" evidence="3">
    <location>
        <begin position="213"/>
        <end position="234"/>
    </location>
</feature>
<dbReference type="EMBL" id="CU928167">
    <property type="protein sequence ID" value="CAR22085.1"/>
    <property type="molecule type" value="Genomic_DNA"/>
</dbReference>
<dbReference type="RefSeq" id="XP_002552523.1">
    <property type="nucleotide sequence ID" value="XM_002552477.1"/>
</dbReference>
<dbReference type="SMR" id="C5DE74"/>
<dbReference type="FunCoup" id="C5DE74">
    <property type="interactions" value="24"/>
</dbReference>
<dbReference type="STRING" id="559295.C5DE74"/>
<dbReference type="GeneID" id="8291392"/>
<dbReference type="KEGG" id="lth:KLTH0C06864g"/>
<dbReference type="eggNOG" id="KOG0929">
    <property type="taxonomic scope" value="Eukaryota"/>
</dbReference>
<dbReference type="HOGENOM" id="CLU_017717_0_0_1"/>
<dbReference type="InParanoid" id="C5DE74"/>
<dbReference type="OMA" id="EGRIFIF"/>
<dbReference type="OrthoDB" id="2157641at2759"/>
<dbReference type="Proteomes" id="UP000002036">
    <property type="component" value="Chromosome C"/>
</dbReference>
<dbReference type="GO" id="GO:0005935">
    <property type="term" value="C:cellular bud neck"/>
    <property type="evidence" value="ECO:0007669"/>
    <property type="project" value="UniProtKB-SubCell"/>
</dbReference>
<dbReference type="GO" id="GO:0005934">
    <property type="term" value="C:cellular bud tip"/>
    <property type="evidence" value="ECO:0007669"/>
    <property type="project" value="UniProtKB-SubCell"/>
</dbReference>
<dbReference type="GO" id="GO:0005737">
    <property type="term" value="C:cytoplasm"/>
    <property type="evidence" value="ECO:0007669"/>
    <property type="project" value="UniProtKB-SubCell"/>
</dbReference>
<dbReference type="GO" id="GO:0005886">
    <property type="term" value="C:plasma membrane"/>
    <property type="evidence" value="ECO:0007669"/>
    <property type="project" value="UniProtKB-SubCell"/>
</dbReference>
<dbReference type="GO" id="GO:0005085">
    <property type="term" value="F:guanyl-nucleotide exchange factor activity"/>
    <property type="evidence" value="ECO:0007669"/>
    <property type="project" value="UniProtKB-KW"/>
</dbReference>
<dbReference type="GO" id="GO:0032012">
    <property type="term" value="P:regulation of ARF protein signal transduction"/>
    <property type="evidence" value="ECO:0007669"/>
    <property type="project" value="InterPro"/>
</dbReference>
<dbReference type="Gene3D" id="1.10.1000.11">
    <property type="entry name" value="Arf Nucleotide-binding Site Opener,domain 2"/>
    <property type="match status" value="1"/>
</dbReference>
<dbReference type="InterPro" id="IPR056468">
    <property type="entry name" value="PH_GEF_YEL1"/>
</dbReference>
<dbReference type="InterPro" id="IPR023394">
    <property type="entry name" value="Sec7_C_sf"/>
</dbReference>
<dbReference type="InterPro" id="IPR000904">
    <property type="entry name" value="Sec7_dom"/>
</dbReference>
<dbReference type="InterPro" id="IPR035999">
    <property type="entry name" value="Sec7_dom_sf"/>
</dbReference>
<dbReference type="Pfam" id="PF23633">
    <property type="entry name" value="PH_GEF_YEL1"/>
    <property type="match status" value="1"/>
</dbReference>
<dbReference type="Pfam" id="PF01369">
    <property type="entry name" value="Sec7"/>
    <property type="match status" value="1"/>
</dbReference>
<dbReference type="SMART" id="SM00222">
    <property type="entry name" value="Sec7"/>
    <property type="match status" value="1"/>
</dbReference>
<dbReference type="SUPFAM" id="SSF48425">
    <property type="entry name" value="Sec7 domain"/>
    <property type="match status" value="1"/>
</dbReference>
<dbReference type="PROSITE" id="PS50190">
    <property type="entry name" value="SEC7"/>
    <property type="match status" value="1"/>
</dbReference>
<protein>
    <recommendedName>
        <fullName>Guanine-nucleotide exchange factor YEL1</fullName>
    </recommendedName>
</protein>